<reference key="1">
    <citation type="journal article" date="2007" name="Genome Biol.">
        <title>Genome analysis and genome-wide proteomics of Thermococcus gammatolerans, the most radioresistant organism known amongst the Archaea.</title>
        <authorList>
            <person name="Zivanovic Y."/>
            <person name="Armengaud J."/>
            <person name="Lagorce A."/>
            <person name="Leplat C."/>
            <person name="Guerin P."/>
            <person name="Dutertre M."/>
            <person name="Anthouard V."/>
            <person name="Forterre P."/>
            <person name="Wincker P."/>
            <person name="Confalonieri F."/>
        </authorList>
    </citation>
    <scope>NUCLEOTIDE SEQUENCE [LARGE SCALE GENOMIC DNA]</scope>
    <source>
        <strain>DSM 15229 / JCM 11827 / EJ3</strain>
    </source>
</reference>
<evidence type="ECO:0000255" key="1">
    <source>
        <dbReference type="HAMAP-Rule" id="MF_00133"/>
    </source>
</evidence>
<proteinExistence type="inferred from homology"/>
<accession>C5A1P4</accession>
<organism>
    <name type="scientific">Thermococcus gammatolerans (strain DSM 15229 / JCM 11827 / EJ3)</name>
    <dbReference type="NCBI Taxonomy" id="593117"/>
    <lineage>
        <taxon>Archaea</taxon>
        <taxon>Methanobacteriati</taxon>
        <taxon>Methanobacteriota</taxon>
        <taxon>Thermococci</taxon>
        <taxon>Thermococcales</taxon>
        <taxon>Thermococcaceae</taxon>
        <taxon>Thermococcus</taxon>
    </lineage>
</organism>
<sequence>MKAVLPDSKIPKRWYNILPDLPEPLAPPLDPETDEPIEPEKLLRIFAEELVKQEMSTERYIEIPKKVRELYAKIGRPTPLFRATNLEKALGTPARIYFKYEGATVTGSHKINTALAQAYYAKEQGIERLVTETGAGQWGTALSLAGALLGLKIRVYMARASYQQKPYRKTIMRLYGAEIYPSPSDRTEIGRKFLSEDPNHPGGLGIAISEAIEDVLKDEKARYALGSVLNHVLMHQTVIGLEAQEQMKEFEEPDVIIGCVGGGSNFAGLAYPFVRDVLSGKADYEFIAVEPKAAPSMTRGVYKYDFGDSGGYTPKMKMHTLGHTYYVPPIHAGGLRYHGLAPTLSILINHGIVKPVAYHQTEVFQAAELFAKTEGIIPAPESAHAIKGVIDRALKAKEEGREEVILFNLSGHGLLDLKGYEDYLDGKLEDYEPDYFPALG</sequence>
<name>TRPB_THEGJ</name>
<protein>
    <recommendedName>
        <fullName evidence="1">Tryptophan synthase beta chain</fullName>
        <ecNumber evidence="1">4.2.1.20</ecNumber>
    </recommendedName>
</protein>
<dbReference type="EC" id="4.2.1.20" evidence="1"/>
<dbReference type="EMBL" id="CP001398">
    <property type="protein sequence ID" value="ACS34313.1"/>
    <property type="molecule type" value="Genomic_DNA"/>
</dbReference>
<dbReference type="RefSeq" id="WP_015859422.1">
    <property type="nucleotide sequence ID" value="NC_012804.1"/>
</dbReference>
<dbReference type="SMR" id="C5A1P4"/>
<dbReference type="STRING" id="593117.TGAM_1811"/>
<dbReference type="PaxDb" id="593117-TGAM_1811"/>
<dbReference type="GeneID" id="7987638"/>
<dbReference type="KEGG" id="tga:TGAM_1811"/>
<dbReference type="PATRIC" id="fig|593117.10.peg.1820"/>
<dbReference type="eggNOG" id="arCOG01432">
    <property type="taxonomic scope" value="Archaea"/>
</dbReference>
<dbReference type="HOGENOM" id="CLU_042858_1_0_2"/>
<dbReference type="OrthoDB" id="371827at2157"/>
<dbReference type="UniPathway" id="UPA00035">
    <property type="reaction ID" value="UER00044"/>
</dbReference>
<dbReference type="Proteomes" id="UP000001488">
    <property type="component" value="Chromosome"/>
</dbReference>
<dbReference type="GO" id="GO:0005737">
    <property type="term" value="C:cytoplasm"/>
    <property type="evidence" value="ECO:0007669"/>
    <property type="project" value="TreeGrafter"/>
</dbReference>
<dbReference type="GO" id="GO:0052684">
    <property type="term" value="F:L-serine hydro-lyase (adding indole, L-tryptophan-forming) activity"/>
    <property type="evidence" value="ECO:0007669"/>
    <property type="project" value="TreeGrafter"/>
</dbReference>
<dbReference type="GO" id="GO:0030170">
    <property type="term" value="F:pyridoxal phosphate binding"/>
    <property type="evidence" value="ECO:0007669"/>
    <property type="project" value="InterPro"/>
</dbReference>
<dbReference type="GO" id="GO:0004834">
    <property type="term" value="F:tryptophan synthase activity"/>
    <property type="evidence" value="ECO:0007669"/>
    <property type="project" value="UniProtKB-UniRule"/>
</dbReference>
<dbReference type="CDD" id="cd06446">
    <property type="entry name" value="Trp-synth_B"/>
    <property type="match status" value="1"/>
</dbReference>
<dbReference type="Gene3D" id="3.40.50.1100">
    <property type="match status" value="2"/>
</dbReference>
<dbReference type="HAMAP" id="MF_00133">
    <property type="entry name" value="Trp_synth_beta"/>
    <property type="match status" value="1"/>
</dbReference>
<dbReference type="InterPro" id="IPR006316">
    <property type="entry name" value="Trp_synth_b-like"/>
</dbReference>
<dbReference type="InterPro" id="IPR006653">
    <property type="entry name" value="Trp_synth_b_CS"/>
</dbReference>
<dbReference type="InterPro" id="IPR006654">
    <property type="entry name" value="Trp_synth_beta"/>
</dbReference>
<dbReference type="InterPro" id="IPR023026">
    <property type="entry name" value="Trp_synth_beta/beta-like"/>
</dbReference>
<dbReference type="InterPro" id="IPR001926">
    <property type="entry name" value="TrpB-like_PALP"/>
</dbReference>
<dbReference type="InterPro" id="IPR036052">
    <property type="entry name" value="TrpB-like_PALP_sf"/>
</dbReference>
<dbReference type="NCBIfam" id="NF009057">
    <property type="entry name" value="PRK12391.1"/>
    <property type="match status" value="1"/>
</dbReference>
<dbReference type="NCBIfam" id="TIGR01415">
    <property type="entry name" value="trpB_rel"/>
    <property type="match status" value="1"/>
</dbReference>
<dbReference type="PANTHER" id="PTHR48077:SF6">
    <property type="entry name" value="TRYPTOPHAN SYNTHASE"/>
    <property type="match status" value="1"/>
</dbReference>
<dbReference type="PANTHER" id="PTHR48077">
    <property type="entry name" value="TRYPTOPHAN SYNTHASE-RELATED"/>
    <property type="match status" value="1"/>
</dbReference>
<dbReference type="Pfam" id="PF00291">
    <property type="entry name" value="PALP"/>
    <property type="match status" value="1"/>
</dbReference>
<dbReference type="PIRSF" id="PIRSF001413">
    <property type="entry name" value="Trp_syn_beta"/>
    <property type="match status" value="1"/>
</dbReference>
<dbReference type="PIRSF" id="PIRSF500824">
    <property type="entry name" value="TrpB_prok"/>
    <property type="match status" value="1"/>
</dbReference>
<dbReference type="SUPFAM" id="SSF53686">
    <property type="entry name" value="Tryptophan synthase beta subunit-like PLP-dependent enzymes"/>
    <property type="match status" value="1"/>
</dbReference>
<dbReference type="PROSITE" id="PS00168">
    <property type="entry name" value="TRP_SYNTHASE_BETA"/>
    <property type="match status" value="1"/>
</dbReference>
<gene>
    <name evidence="1" type="primary">trpB</name>
    <name type="ordered locus">TGAM_1811</name>
</gene>
<comment type="function">
    <text evidence="1">The beta subunit is responsible for the synthesis of L-tryptophan from indole and L-serine.</text>
</comment>
<comment type="catalytic activity">
    <reaction evidence="1">
        <text>(1S,2R)-1-C-(indol-3-yl)glycerol 3-phosphate + L-serine = D-glyceraldehyde 3-phosphate + L-tryptophan + H2O</text>
        <dbReference type="Rhea" id="RHEA:10532"/>
        <dbReference type="ChEBI" id="CHEBI:15377"/>
        <dbReference type="ChEBI" id="CHEBI:33384"/>
        <dbReference type="ChEBI" id="CHEBI:57912"/>
        <dbReference type="ChEBI" id="CHEBI:58866"/>
        <dbReference type="ChEBI" id="CHEBI:59776"/>
        <dbReference type="EC" id="4.2.1.20"/>
    </reaction>
</comment>
<comment type="cofactor">
    <cofactor evidence="1">
        <name>pyridoxal 5'-phosphate</name>
        <dbReference type="ChEBI" id="CHEBI:597326"/>
    </cofactor>
</comment>
<comment type="pathway">
    <text evidence="1">Amino-acid biosynthesis; L-tryptophan biosynthesis; L-tryptophan from chorismate: step 5/5.</text>
</comment>
<comment type="subunit">
    <text evidence="1">Tetramer of two alpha and two beta chains.</text>
</comment>
<comment type="similarity">
    <text evidence="1">Belongs to the TrpB family.</text>
</comment>
<feature type="chain" id="PRO_1000203195" description="Tryptophan synthase beta chain">
    <location>
        <begin position="1"/>
        <end position="440"/>
    </location>
</feature>
<feature type="modified residue" description="N6-(pyridoxal phosphate)lysine" evidence="1">
    <location>
        <position position="110"/>
    </location>
</feature>
<keyword id="KW-0028">Amino-acid biosynthesis</keyword>
<keyword id="KW-0057">Aromatic amino acid biosynthesis</keyword>
<keyword id="KW-0456">Lyase</keyword>
<keyword id="KW-0663">Pyridoxal phosphate</keyword>
<keyword id="KW-1185">Reference proteome</keyword>
<keyword id="KW-0822">Tryptophan biosynthesis</keyword>